<comment type="subcellular location">
    <subcellularLocation>
        <location evidence="1">Membrane</location>
        <topology evidence="1">Multi-pass membrane protein</topology>
    </subcellularLocation>
</comment>
<comment type="alternative products">
    <event type="alternative splicing"/>
    <isoform>
        <id>Q18936-1</id>
        <name>a</name>
        <sequence type="displayed"/>
    </isoform>
    <isoform>
        <id>Q18936-2</id>
        <name>b</name>
        <sequence type="described" ref="VSP_053715"/>
    </isoform>
</comment>
<comment type="similarity">
    <text evidence="5">Belongs to the UPF0359 family.</text>
</comment>
<proteinExistence type="evidence at protein level"/>
<feature type="chain" id="PRO_0000076105" description="Transmembrane protein adipocyte-associated 1 homolog">
    <location>
        <begin position="1"/>
        <end position="458"/>
    </location>
</feature>
<feature type="transmembrane region" description="Helical" evidence="2">
    <location>
        <begin position="81"/>
        <end position="101"/>
    </location>
</feature>
<feature type="transmembrane region" description="Helical" evidence="2">
    <location>
        <begin position="114"/>
        <end position="134"/>
    </location>
</feature>
<feature type="transmembrane region" description="Helical" evidence="2">
    <location>
        <begin position="152"/>
        <end position="172"/>
    </location>
</feature>
<feature type="transmembrane region" description="Helical" evidence="2">
    <location>
        <begin position="181"/>
        <end position="201"/>
    </location>
</feature>
<feature type="transmembrane region" description="Helical" evidence="2">
    <location>
        <begin position="225"/>
        <end position="245"/>
    </location>
</feature>
<feature type="transmembrane region" description="Helical" evidence="2">
    <location>
        <begin position="263"/>
        <end position="283"/>
    </location>
</feature>
<feature type="transmembrane region" description="Helical" evidence="2">
    <location>
        <begin position="291"/>
        <end position="311"/>
    </location>
</feature>
<feature type="region of interest" description="Disordered" evidence="3">
    <location>
        <begin position="409"/>
        <end position="458"/>
    </location>
</feature>
<feature type="compositionally biased region" description="Basic and acidic residues" evidence="3">
    <location>
        <begin position="411"/>
        <end position="422"/>
    </location>
</feature>
<feature type="glycosylation site" description="N-linked (GlcNAc...) asparagine" evidence="2">
    <location>
        <position position="21"/>
    </location>
</feature>
<feature type="glycosylation site" description="N-linked (GlcNAc...) asparagine" evidence="4">
    <location>
        <position position="45"/>
    </location>
</feature>
<feature type="glycosylation site" description="N-linked (GlcNAc...) asparagine" evidence="2">
    <location>
        <position position="323"/>
    </location>
</feature>
<feature type="glycosylation site" description="N-linked (GlcNAc...) asparagine" evidence="2">
    <location>
        <position position="324"/>
    </location>
</feature>
<feature type="splice variant" id="VSP_053715" description="In isoform b." evidence="5">
    <location>
        <begin position="1"/>
        <end position="395"/>
    </location>
</feature>
<protein>
    <recommendedName>
        <fullName>Transmembrane protein adipocyte-associated 1 homolog</fullName>
    </recommendedName>
</protein>
<evidence type="ECO:0000250" key="1"/>
<evidence type="ECO:0000255" key="2"/>
<evidence type="ECO:0000256" key="3">
    <source>
        <dbReference type="SAM" id="MobiDB-lite"/>
    </source>
</evidence>
<evidence type="ECO:0000269" key="4">
    <source>
    </source>
</evidence>
<evidence type="ECO:0000305" key="5"/>
<name>TPRA1_CAEEL</name>
<keyword id="KW-0025">Alternative splicing</keyword>
<keyword id="KW-0325">Glycoprotein</keyword>
<keyword id="KW-0472">Membrane</keyword>
<keyword id="KW-1185">Reference proteome</keyword>
<keyword id="KW-0812">Transmembrane</keyword>
<keyword id="KW-1133">Transmembrane helix</keyword>
<gene>
    <name type="primary">tpra-1</name>
    <name type="ORF">D1046.5</name>
</gene>
<reference key="1">
    <citation type="journal article" date="1998" name="Science">
        <title>Genome sequence of the nematode C. elegans: a platform for investigating biology.</title>
        <authorList>
            <consortium name="The C. elegans sequencing consortium"/>
        </authorList>
    </citation>
    <scope>NUCLEOTIDE SEQUENCE [LARGE SCALE GENOMIC DNA]</scope>
    <scope>ALTERNATIVE SPLICING</scope>
    <source>
        <strain>Bristol N2</strain>
    </source>
</reference>
<reference key="2">
    <citation type="journal article" date="2007" name="Mol. Cell. Proteomics">
        <title>Proteomics reveals N-linked glycoprotein diversity in Caenorhabditis elegans and suggests an atypical translocation mechanism for integral membrane proteins.</title>
        <authorList>
            <person name="Kaji H."/>
            <person name="Kamiie J."/>
            <person name="Kawakami H."/>
            <person name="Kido K."/>
            <person name="Yamauchi Y."/>
            <person name="Shinkawa T."/>
            <person name="Taoka M."/>
            <person name="Takahashi N."/>
            <person name="Isobe T."/>
        </authorList>
    </citation>
    <scope>GLYCOSYLATION [LARGE SCALE ANALYSIS] AT ASN-45</scope>
    <scope>IDENTIFICATION BY MASS SPECTROMETRY</scope>
    <source>
        <strain>Bristol N2</strain>
    </source>
</reference>
<organism>
    <name type="scientific">Caenorhabditis elegans</name>
    <dbReference type="NCBI Taxonomy" id="6239"/>
    <lineage>
        <taxon>Eukaryota</taxon>
        <taxon>Metazoa</taxon>
        <taxon>Ecdysozoa</taxon>
        <taxon>Nematoda</taxon>
        <taxon>Chromadorea</taxon>
        <taxon>Rhabditida</taxon>
        <taxon>Rhabditina</taxon>
        <taxon>Rhabditomorpha</taxon>
        <taxon>Rhabditoidea</taxon>
        <taxon>Rhabditidae</taxon>
        <taxon>Peloderinae</taxon>
        <taxon>Caenorhabditis</taxon>
    </lineage>
</organism>
<dbReference type="EMBL" id="Z68160">
    <property type="protein sequence ID" value="CAA92293.2"/>
    <property type="molecule type" value="Genomic_DNA"/>
</dbReference>
<dbReference type="EMBL" id="Z68215">
    <property type="protein sequence ID" value="CAA92293.2"/>
    <property type="status" value="JOINED"/>
    <property type="molecule type" value="Genomic_DNA"/>
</dbReference>
<dbReference type="EMBL" id="Z68215">
    <property type="protein sequence ID" value="CBK19393.1"/>
    <property type="molecule type" value="Genomic_DNA"/>
</dbReference>
<dbReference type="PIR" id="T20292">
    <property type="entry name" value="T20292"/>
</dbReference>
<dbReference type="RefSeq" id="NP_001255357.1">
    <molecule id="Q18936-1"/>
    <property type="nucleotide sequence ID" value="NM_001268428.2"/>
</dbReference>
<dbReference type="RefSeq" id="NP_001255358.1">
    <molecule id="Q18936-2"/>
    <property type="nucleotide sequence ID" value="NM_001268429.3"/>
</dbReference>
<dbReference type="SMR" id="Q18936"/>
<dbReference type="FunCoup" id="Q18936">
    <property type="interactions" value="624"/>
</dbReference>
<dbReference type="STRING" id="6239.D1046.5a.1"/>
<dbReference type="GlyCosmos" id="Q18936">
    <property type="glycosylation" value="4 sites, No reported glycans"/>
</dbReference>
<dbReference type="iPTMnet" id="Q18936"/>
<dbReference type="PaxDb" id="6239-D1046.5a"/>
<dbReference type="EnsemblMetazoa" id="D1046.5a.1">
    <molecule id="Q18936-1"/>
    <property type="protein sequence ID" value="D1046.5a.1"/>
    <property type="gene ID" value="WBGene00008366"/>
</dbReference>
<dbReference type="EnsemblMetazoa" id="D1046.5b.1">
    <molecule id="Q18936-2"/>
    <property type="protein sequence ID" value="D1046.5b.1"/>
    <property type="gene ID" value="WBGene00008366"/>
</dbReference>
<dbReference type="GeneID" id="259586"/>
<dbReference type="KEGG" id="cel:CELE_D1046.5"/>
<dbReference type="UCSC" id="D1046.5">
    <molecule id="Q18936-1"/>
    <property type="organism name" value="c. elegans"/>
</dbReference>
<dbReference type="AGR" id="WB:WBGene00008366"/>
<dbReference type="CTD" id="259586"/>
<dbReference type="WormBase" id="D1046.5a">
    <molecule id="Q18936-1"/>
    <property type="protein sequence ID" value="CE32845"/>
    <property type="gene ID" value="WBGene00008366"/>
    <property type="gene designation" value="tpra-1"/>
</dbReference>
<dbReference type="WormBase" id="D1046.5b">
    <molecule id="Q18936-2"/>
    <property type="protein sequence ID" value="CE44691"/>
    <property type="gene ID" value="WBGene00008366"/>
    <property type="gene designation" value="tpra-1"/>
</dbReference>
<dbReference type="eggNOG" id="KOG4536">
    <property type="taxonomic scope" value="Eukaryota"/>
</dbReference>
<dbReference type="GeneTree" id="ENSGT00390000016807"/>
<dbReference type="HOGENOM" id="CLU_702556_0_0_1"/>
<dbReference type="InParanoid" id="Q18936"/>
<dbReference type="OMA" id="FRIRYWD"/>
<dbReference type="OrthoDB" id="10027388at2759"/>
<dbReference type="PhylomeDB" id="Q18936"/>
<dbReference type="PRO" id="PR:Q18936"/>
<dbReference type="Proteomes" id="UP000001940">
    <property type="component" value="Chromosome IV"/>
</dbReference>
<dbReference type="Bgee" id="WBGene00008366">
    <property type="expression patterns" value="Expressed in larva and 3 other cell types or tissues"/>
</dbReference>
<dbReference type="GO" id="GO:0005886">
    <property type="term" value="C:plasma membrane"/>
    <property type="evidence" value="ECO:0000318"/>
    <property type="project" value="GO_Central"/>
</dbReference>
<dbReference type="GO" id="GO:0004930">
    <property type="term" value="F:G protein-coupled receptor activity"/>
    <property type="evidence" value="ECO:0000318"/>
    <property type="project" value="GO_Central"/>
</dbReference>
<dbReference type="GO" id="GO:0007186">
    <property type="term" value="P:G protein-coupled receptor signaling pathway"/>
    <property type="evidence" value="ECO:0000318"/>
    <property type="project" value="GO_Central"/>
</dbReference>
<dbReference type="InterPro" id="IPR018781">
    <property type="entry name" value="TPRA1/CAND2/CAND8"/>
</dbReference>
<dbReference type="PANTHER" id="PTHR15876">
    <property type="entry name" value="TRANSMEMBRANE PROTEIN ADIPOCYTE-ASSOCIATED 1"/>
    <property type="match status" value="1"/>
</dbReference>
<dbReference type="PANTHER" id="PTHR15876:SF8">
    <property type="entry name" value="TRANSMEMBRANE PROTEIN ADIPOCYTE-ASSOCIATED 1"/>
    <property type="match status" value="1"/>
</dbReference>
<dbReference type="Pfam" id="PF10160">
    <property type="entry name" value="Tmemb_40"/>
    <property type="match status" value="1"/>
</dbReference>
<accession>Q18936</accession>
<accession>D3YT19</accession>
<sequence length="458" mass="51812">MSVIFHENPGTSLGSVVPDTNTSFERESQLSVKTSPEWIDELFPNVSFIDSPTHQVIRGFCRDVFVYRLPGGFRVRYWDAVILVPNILFLLFLILKCGSVIRKLRTGNSPVLRAFTLLVYVSTLVNIIRCAYSMTLSMTDGLEQTVDQTLWIIIKFFYLTAEFCALTFGLLFGHLDNGKSILIALLGTLLVSIPHTAVQVIIEMKIIDNSWLPLTYFDIQSDGGFLFWVFSSAVLALVYFFIMCLPLVCCQKYTKLPSKGSFLIYCMMMVVLNVLQSMGAALILFKSSDGLCFVGVSTYVYFVLYPPIIYFTFLRKKLKTPPNNTSGLFMYRKHKDEQGSGDLPDSYYPRFSGLTSPSYDDLFDYDRDARFTHYDISRNEYVQNPHYNTYSTPLIMTSVETAESTVTTRTGSDDYAHHRDSMLSEPSTGTTTRHLKGLGPQGSLVFEDDPSSLTSLRM</sequence>